<evidence type="ECO:0000255" key="1">
    <source>
        <dbReference type="HAMAP-Rule" id="MF_01077"/>
    </source>
</evidence>
<reference key="1">
    <citation type="submission" date="2008-04" db="EMBL/GenBank/DDBJ databases">
        <title>Complete sequence of chromosome 1 of Burkholderia ambifaria MC40-6.</title>
        <authorList>
            <person name="Copeland A."/>
            <person name="Lucas S."/>
            <person name="Lapidus A."/>
            <person name="Glavina del Rio T."/>
            <person name="Dalin E."/>
            <person name="Tice H."/>
            <person name="Pitluck S."/>
            <person name="Chain P."/>
            <person name="Malfatti S."/>
            <person name="Shin M."/>
            <person name="Vergez L."/>
            <person name="Lang D."/>
            <person name="Schmutz J."/>
            <person name="Larimer F."/>
            <person name="Land M."/>
            <person name="Hauser L."/>
            <person name="Kyrpides N."/>
            <person name="Lykidis A."/>
            <person name="Ramette A."/>
            <person name="Konstantinidis K."/>
            <person name="Tiedje J."/>
            <person name="Richardson P."/>
        </authorList>
    </citation>
    <scope>NUCLEOTIDE SEQUENCE [LARGE SCALE GENOMIC DNA]</scope>
    <source>
        <strain>MC40-6</strain>
    </source>
</reference>
<proteinExistence type="inferred from homology"/>
<keyword id="KW-0963">Cytoplasm</keyword>
<keyword id="KW-0690">Ribosome biogenesis</keyword>
<gene>
    <name evidence="1" type="primary">rimP</name>
    <name type="ordered locus">BamMC406_1420</name>
</gene>
<feature type="chain" id="PRO_1000136738" description="Ribosome maturation factor RimP">
    <location>
        <begin position="1"/>
        <end position="152"/>
    </location>
</feature>
<comment type="function">
    <text evidence="1">Required for maturation of 30S ribosomal subunits.</text>
</comment>
<comment type="subcellular location">
    <subcellularLocation>
        <location evidence="1">Cytoplasm</location>
    </subcellularLocation>
</comment>
<comment type="similarity">
    <text evidence="1">Belongs to the RimP family.</text>
</comment>
<protein>
    <recommendedName>
        <fullName evidence="1">Ribosome maturation factor RimP</fullName>
    </recommendedName>
</protein>
<organism>
    <name type="scientific">Burkholderia ambifaria (strain MC40-6)</name>
    <dbReference type="NCBI Taxonomy" id="398577"/>
    <lineage>
        <taxon>Bacteria</taxon>
        <taxon>Pseudomonadati</taxon>
        <taxon>Pseudomonadota</taxon>
        <taxon>Betaproteobacteria</taxon>
        <taxon>Burkholderiales</taxon>
        <taxon>Burkholderiaceae</taxon>
        <taxon>Burkholderia</taxon>
        <taxon>Burkholderia cepacia complex</taxon>
    </lineage>
</organism>
<name>RIMP_BURA4</name>
<dbReference type="EMBL" id="CP001025">
    <property type="protein sequence ID" value="ACB63908.1"/>
    <property type="molecule type" value="Genomic_DNA"/>
</dbReference>
<dbReference type="RefSeq" id="WP_006752291.1">
    <property type="nucleotide sequence ID" value="NC_010551.1"/>
</dbReference>
<dbReference type="SMR" id="B1YP34"/>
<dbReference type="GeneID" id="93083219"/>
<dbReference type="KEGG" id="bac:BamMC406_1420"/>
<dbReference type="HOGENOM" id="CLU_070525_1_0_4"/>
<dbReference type="OrthoDB" id="9805006at2"/>
<dbReference type="Proteomes" id="UP000001680">
    <property type="component" value="Chromosome 1"/>
</dbReference>
<dbReference type="GO" id="GO:0005829">
    <property type="term" value="C:cytosol"/>
    <property type="evidence" value="ECO:0007669"/>
    <property type="project" value="TreeGrafter"/>
</dbReference>
<dbReference type="GO" id="GO:0000028">
    <property type="term" value="P:ribosomal small subunit assembly"/>
    <property type="evidence" value="ECO:0007669"/>
    <property type="project" value="TreeGrafter"/>
</dbReference>
<dbReference type="GO" id="GO:0006412">
    <property type="term" value="P:translation"/>
    <property type="evidence" value="ECO:0007669"/>
    <property type="project" value="TreeGrafter"/>
</dbReference>
<dbReference type="CDD" id="cd01734">
    <property type="entry name" value="YlxS_C"/>
    <property type="match status" value="1"/>
</dbReference>
<dbReference type="Gene3D" id="2.30.30.180">
    <property type="entry name" value="Ribosome maturation factor RimP, C-terminal domain"/>
    <property type="match status" value="1"/>
</dbReference>
<dbReference type="Gene3D" id="3.30.300.70">
    <property type="entry name" value="RimP-like superfamily, N-terminal"/>
    <property type="match status" value="1"/>
</dbReference>
<dbReference type="HAMAP" id="MF_01077">
    <property type="entry name" value="RimP"/>
    <property type="match status" value="1"/>
</dbReference>
<dbReference type="InterPro" id="IPR003728">
    <property type="entry name" value="Ribosome_maturation_RimP"/>
</dbReference>
<dbReference type="InterPro" id="IPR028998">
    <property type="entry name" value="RimP_C"/>
</dbReference>
<dbReference type="InterPro" id="IPR036847">
    <property type="entry name" value="RimP_C_sf"/>
</dbReference>
<dbReference type="InterPro" id="IPR028989">
    <property type="entry name" value="RimP_N"/>
</dbReference>
<dbReference type="InterPro" id="IPR035956">
    <property type="entry name" value="RimP_N_sf"/>
</dbReference>
<dbReference type="NCBIfam" id="NF000929">
    <property type="entry name" value="PRK00092.2-1"/>
    <property type="match status" value="1"/>
</dbReference>
<dbReference type="PANTHER" id="PTHR33867">
    <property type="entry name" value="RIBOSOME MATURATION FACTOR RIMP"/>
    <property type="match status" value="1"/>
</dbReference>
<dbReference type="PANTHER" id="PTHR33867:SF1">
    <property type="entry name" value="RIBOSOME MATURATION FACTOR RIMP"/>
    <property type="match status" value="1"/>
</dbReference>
<dbReference type="Pfam" id="PF17384">
    <property type="entry name" value="DUF150_C"/>
    <property type="match status" value="1"/>
</dbReference>
<dbReference type="Pfam" id="PF02576">
    <property type="entry name" value="RimP_N"/>
    <property type="match status" value="1"/>
</dbReference>
<dbReference type="SUPFAM" id="SSF74942">
    <property type="entry name" value="YhbC-like, C-terminal domain"/>
    <property type="match status" value="1"/>
</dbReference>
<dbReference type="SUPFAM" id="SSF75420">
    <property type="entry name" value="YhbC-like, N-terminal domain"/>
    <property type="match status" value="1"/>
</dbReference>
<accession>B1YP34</accession>
<sequence length="152" mass="17070">MQLTELIETTVTGLGYELVDLERTGRGMLCIYIDQLAGISLEDCEKVTRQLQHVLTVENIDYERLEVSSPGLDRPLKKLADFERFAGSEVSVTLKKPLDGRKTYRGILHAPNGETIGLEFEGKKGEAAMLDFTLADIDKARLIPQVDFRSRK</sequence>